<comment type="function">
    <text evidence="2">Essential for the degradation of glycogen in lysosomes. Has highest activity on alpha-1,4-linked glycosidic linkages, but can also hydrolyze alpha-1,6-linked glucans.</text>
</comment>
<comment type="catalytic activity">
    <reaction evidence="2">
        <text>Hydrolysis of terminal, non-reducing (1-&gt;4)-linked alpha-D-glucose residues with release of alpha-D-glucose.</text>
        <dbReference type="EC" id="3.2.1.20"/>
    </reaction>
</comment>
<comment type="subcellular location">
    <subcellularLocation>
        <location evidence="2">Lysosome</location>
    </subcellularLocation>
    <subcellularLocation>
        <location evidence="2">Lysosome membrane</location>
    </subcellularLocation>
</comment>
<comment type="similarity">
    <text evidence="7">Belongs to the glycosyl hydrolase 31 family.</text>
</comment>
<gene>
    <name type="primary">GAA</name>
</gene>
<accession>Q5R7A9</accession>
<feature type="signal peptide" evidence="3">
    <location>
        <begin position="1"/>
        <end position="27"/>
    </location>
</feature>
<feature type="propeptide" id="PRO_0000260440" evidence="1">
    <location>
        <begin position="28"/>
        <end position="69"/>
    </location>
</feature>
<feature type="chain" id="PRO_0000260441" description="Lysosomal alpha-glucosidase">
    <location>
        <begin position="70"/>
        <end position="952"/>
    </location>
</feature>
<feature type="domain" description="P-type" evidence="4">
    <location>
        <begin position="80"/>
        <end position="131"/>
    </location>
</feature>
<feature type="region of interest" description="Disordered" evidence="6">
    <location>
        <begin position="47"/>
        <end position="80"/>
    </location>
</feature>
<feature type="active site" description="Nucleophile" evidence="5">
    <location>
        <position position="518"/>
    </location>
</feature>
<feature type="active site" evidence="1">
    <location>
        <position position="521"/>
    </location>
</feature>
<feature type="binding site" evidence="2">
    <location>
        <position position="404"/>
    </location>
    <ligand>
        <name>substrate</name>
    </ligand>
</feature>
<feature type="binding site" evidence="2">
    <location>
        <position position="600"/>
    </location>
    <ligand>
        <name>substrate</name>
    </ligand>
</feature>
<feature type="binding site" evidence="2">
    <location>
        <position position="616"/>
    </location>
    <ligand>
        <name>substrate</name>
    </ligand>
</feature>
<feature type="binding site" evidence="2">
    <location>
        <position position="674"/>
    </location>
    <ligand>
        <name>substrate</name>
    </ligand>
</feature>
<feature type="glycosylation site" description="N-linked (GlcNAc...) asparagine" evidence="3">
    <location>
        <position position="140"/>
    </location>
</feature>
<feature type="glycosylation site" description="N-linked (GlcNAc...) asparagine" evidence="3">
    <location>
        <position position="233"/>
    </location>
</feature>
<feature type="glycosylation site" description="N-linked (GlcNAc...) asparagine" evidence="3">
    <location>
        <position position="390"/>
    </location>
</feature>
<feature type="glycosylation site" description="N-linked (GlcNAc...) asparagine" evidence="3">
    <location>
        <position position="470"/>
    </location>
</feature>
<feature type="glycosylation site" description="N-linked (GlcNAc...) asparagine" evidence="3">
    <location>
        <position position="652"/>
    </location>
</feature>
<feature type="glycosylation site" description="N-linked (GlcNAc...) asparagine" evidence="3">
    <location>
        <position position="882"/>
    </location>
</feature>
<feature type="glycosylation site" description="N-linked (GlcNAc...) asparagine" evidence="3">
    <location>
        <position position="925"/>
    </location>
</feature>
<feature type="disulfide bond" evidence="4">
    <location>
        <begin position="82"/>
        <end position="109"/>
    </location>
</feature>
<feature type="disulfide bond" evidence="4">
    <location>
        <begin position="92"/>
        <end position="108"/>
    </location>
</feature>
<feature type="disulfide bond" evidence="4">
    <location>
        <begin position="103"/>
        <end position="127"/>
    </location>
</feature>
<feature type="disulfide bond" evidence="2">
    <location>
        <begin position="533"/>
        <end position="558"/>
    </location>
</feature>
<feature type="disulfide bond" evidence="2">
    <location>
        <begin position="647"/>
        <end position="658"/>
    </location>
</feature>
<protein>
    <recommendedName>
        <fullName>Lysosomal alpha-glucosidase</fullName>
        <ecNumber evidence="2">3.2.1.20</ecNumber>
    </recommendedName>
    <alternativeName>
        <fullName>Acid maltase</fullName>
    </alternativeName>
</protein>
<proteinExistence type="evidence at transcript level"/>
<dbReference type="EC" id="3.2.1.20" evidence="2"/>
<dbReference type="EMBL" id="CR860209">
    <property type="protein sequence ID" value="CAH92351.1"/>
    <property type="molecule type" value="mRNA"/>
</dbReference>
<dbReference type="RefSeq" id="NP_001126384.1">
    <property type="nucleotide sequence ID" value="NM_001132912.2"/>
</dbReference>
<dbReference type="SMR" id="Q5R7A9"/>
<dbReference type="FunCoup" id="Q5R7A9">
    <property type="interactions" value="643"/>
</dbReference>
<dbReference type="STRING" id="9601.ENSPPYP00000009778"/>
<dbReference type="CAZy" id="GH31">
    <property type="family name" value="Glycoside Hydrolase Family 31"/>
</dbReference>
<dbReference type="GlyCosmos" id="Q5R7A9">
    <property type="glycosylation" value="7 sites, No reported glycans"/>
</dbReference>
<dbReference type="GeneID" id="100173365"/>
<dbReference type="KEGG" id="pon:100173365"/>
<dbReference type="CTD" id="2548"/>
<dbReference type="eggNOG" id="KOG1065">
    <property type="taxonomic scope" value="Eukaryota"/>
</dbReference>
<dbReference type="InParanoid" id="Q5R7A9"/>
<dbReference type="OrthoDB" id="5839090at2759"/>
<dbReference type="Proteomes" id="UP000001595">
    <property type="component" value="Unplaced"/>
</dbReference>
<dbReference type="GO" id="GO:0005765">
    <property type="term" value="C:lysosomal membrane"/>
    <property type="evidence" value="ECO:0007669"/>
    <property type="project" value="UniProtKB-SubCell"/>
</dbReference>
<dbReference type="GO" id="GO:0004558">
    <property type="term" value="F:alpha-1,4-glucosidase activity"/>
    <property type="evidence" value="ECO:0000250"/>
    <property type="project" value="UniProtKB"/>
</dbReference>
<dbReference type="GO" id="GO:0030246">
    <property type="term" value="F:carbohydrate binding"/>
    <property type="evidence" value="ECO:0007669"/>
    <property type="project" value="InterPro"/>
</dbReference>
<dbReference type="GO" id="GO:0005980">
    <property type="term" value="P:glycogen catabolic process"/>
    <property type="evidence" value="ECO:0000250"/>
    <property type="project" value="UniProtKB"/>
</dbReference>
<dbReference type="GO" id="GO:0007040">
    <property type="term" value="P:lysosome organization"/>
    <property type="evidence" value="ECO:0007669"/>
    <property type="project" value="TreeGrafter"/>
</dbReference>
<dbReference type="CDD" id="cd06602">
    <property type="entry name" value="GH31_MGAM_SI_GAA"/>
    <property type="match status" value="1"/>
</dbReference>
<dbReference type="CDD" id="cd14752">
    <property type="entry name" value="GH31_N"/>
    <property type="match status" value="1"/>
</dbReference>
<dbReference type="CDD" id="cd00111">
    <property type="entry name" value="Trefoil"/>
    <property type="match status" value="1"/>
</dbReference>
<dbReference type="FunFam" id="4.10.110.10:FF:000007">
    <property type="entry name" value="Lysosomal alpha-glucosidase"/>
    <property type="match status" value="1"/>
</dbReference>
<dbReference type="FunFam" id="3.20.20.80:FF:000072">
    <property type="entry name" value="lysosomal alpha-glucosidase isoform X2"/>
    <property type="match status" value="1"/>
</dbReference>
<dbReference type="FunFam" id="2.60.40.1180:FF:000001">
    <property type="entry name" value="Maltase-glucoamylase, intestinal"/>
    <property type="match status" value="1"/>
</dbReference>
<dbReference type="FunFam" id="2.60.40.1180:FF:000005">
    <property type="entry name" value="Maltase-glucoamylase, intestinal"/>
    <property type="match status" value="1"/>
</dbReference>
<dbReference type="FunFam" id="2.60.40.1760:FF:000001">
    <property type="entry name" value="Maltase-glucoamylase, intestinal"/>
    <property type="match status" value="1"/>
</dbReference>
<dbReference type="Gene3D" id="3.20.20.80">
    <property type="entry name" value="Glycosidases"/>
    <property type="match status" value="1"/>
</dbReference>
<dbReference type="Gene3D" id="2.60.40.1760">
    <property type="entry name" value="glycosyl hydrolase (family 31)"/>
    <property type="match status" value="1"/>
</dbReference>
<dbReference type="Gene3D" id="2.60.40.1180">
    <property type="entry name" value="Golgi alpha-mannosidase II"/>
    <property type="match status" value="2"/>
</dbReference>
<dbReference type="Gene3D" id="4.10.110.10">
    <property type="entry name" value="Spasmolytic Protein, domain 1"/>
    <property type="match status" value="1"/>
</dbReference>
<dbReference type="InterPro" id="IPR011013">
    <property type="entry name" value="Gal_mutarotase_sf_dom"/>
</dbReference>
<dbReference type="InterPro" id="IPR030458">
    <property type="entry name" value="Glyco_hydro_31_AS"/>
</dbReference>
<dbReference type="InterPro" id="IPR048395">
    <property type="entry name" value="Glyco_hydro_31_C"/>
</dbReference>
<dbReference type="InterPro" id="IPR030459">
    <property type="entry name" value="Glyco_hydro_31_CS"/>
</dbReference>
<dbReference type="InterPro" id="IPR025887">
    <property type="entry name" value="Glyco_hydro_31_N_dom"/>
</dbReference>
<dbReference type="InterPro" id="IPR000322">
    <property type="entry name" value="Glyco_hydro_31_TIM"/>
</dbReference>
<dbReference type="InterPro" id="IPR013780">
    <property type="entry name" value="Glyco_hydro_b"/>
</dbReference>
<dbReference type="InterPro" id="IPR017853">
    <property type="entry name" value="Glycoside_hydrolase_SF"/>
</dbReference>
<dbReference type="InterPro" id="IPR017957">
    <property type="entry name" value="P_trefoil_CS"/>
</dbReference>
<dbReference type="InterPro" id="IPR000519">
    <property type="entry name" value="P_trefoil_dom"/>
</dbReference>
<dbReference type="InterPro" id="IPR044913">
    <property type="entry name" value="P_trefoil_dom_sf"/>
</dbReference>
<dbReference type="PANTHER" id="PTHR22762">
    <property type="entry name" value="ALPHA-GLUCOSIDASE"/>
    <property type="match status" value="1"/>
</dbReference>
<dbReference type="PANTHER" id="PTHR22762:SF92">
    <property type="entry name" value="LYSOSOMAL ALPHA-GLUCOSIDASE"/>
    <property type="match status" value="1"/>
</dbReference>
<dbReference type="Pfam" id="PF13802">
    <property type="entry name" value="Gal_mutarotas_2"/>
    <property type="match status" value="1"/>
</dbReference>
<dbReference type="Pfam" id="PF01055">
    <property type="entry name" value="Glyco_hydro_31_2nd"/>
    <property type="match status" value="1"/>
</dbReference>
<dbReference type="Pfam" id="PF21365">
    <property type="entry name" value="Glyco_hydro_31_3rd"/>
    <property type="match status" value="1"/>
</dbReference>
<dbReference type="Pfam" id="PF00088">
    <property type="entry name" value="Trefoil"/>
    <property type="match status" value="1"/>
</dbReference>
<dbReference type="SMART" id="SM00018">
    <property type="entry name" value="PD"/>
    <property type="match status" value="1"/>
</dbReference>
<dbReference type="SUPFAM" id="SSF51445">
    <property type="entry name" value="(Trans)glycosidases"/>
    <property type="match status" value="1"/>
</dbReference>
<dbReference type="SUPFAM" id="SSF74650">
    <property type="entry name" value="Galactose mutarotase-like"/>
    <property type="match status" value="1"/>
</dbReference>
<dbReference type="SUPFAM" id="SSF51011">
    <property type="entry name" value="Glycosyl hydrolase domain"/>
    <property type="match status" value="1"/>
</dbReference>
<dbReference type="SUPFAM" id="SSF57492">
    <property type="entry name" value="Trefoil"/>
    <property type="match status" value="1"/>
</dbReference>
<dbReference type="PROSITE" id="PS00129">
    <property type="entry name" value="GLYCOSYL_HYDROL_F31_1"/>
    <property type="match status" value="1"/>
</dbReference>
<dbReference type="PROSITE" id="PS00707">
    <property type="entry name" value="GLYCOSYL_HYDROL_F31_2"/>
    <property type="match status" value="1"/>
</dbReference>
<dbReference type="PROSITE" id="PS00025">
    <property type="entry name" value="P_TREFOIL_1"/>
    <property type="match status" value="1"/>
</dbReference>
<dbReference type="PROSITE" id="PS51448">
    <property type="entry name" value="P_TREFOIL_2"/>
    <property type="match status" value="1"/>
</dbReference>
<name>LYAG_PONAB</name>
<sequence>MRVRHPPCSRRLLAICALVSLATAALLGHILLHDFLLVPRELSGSSPVLEETHPAHQQGASRPGPRDAQAHLGRPRAVPTQCDVPPNSRFDCAPDKAITREQCDARGCCYIPAKQGLRGAQMGQPWCFFPPSYPSYKLENLSSSEMGYTATLTRTTPTFFPKDILTLRLDVMMETENRLHFTIKDPANRRYEVPLETPRVHSRAPSPLYSVEFSEEPFGVIVRRQLDGRVLLNTTVAPLFFADQFLQLSTSLPSQYITGLAEHLSPLMLSTSWTRVTLWNRDLAPTPGANLYGSHPFYLALEDGGSAHGVFLLNSNAMDVVLQPSPALSWRSTGGILDVYIFLGPEPKSVVRQYLDVVGYPFMPPYWGLGFHLCRWGYSSTAITSQVVENMTRAHFPLDVQWNDLDYMDARRDFTFNKDGFRDFPAMVRELHQGGRRYMMIVDPAISSSGPAGSYRPYDEGLRRGVFITNETSQPLIGKVWPGSTAFPDFTNPAALAWWEDMVAEFHDQVPFDGMWIDMNEPSNFIRGSEDGCPDNELENPPYVPGVVGGTLQAATICASSHQFLSTHYNLHNLYGLTEAIASHRALVKARGTRPFVISRSTFAGHGRYAGHWTGDVWSSWEQLASSVPEILQFNLLGVPLVGADVCGFLGNTSEELCVRWTQLGAFYPFMRNHNGLLNLPQEPYSFSEPAQQAMRKALTLRYALLPHLYTLFHQAHVAGETVARPLFLEFPKDSSTWTVDHQLLWGEALLITPVLQAGKAEVTGYFPLGIWYDLQTVPIEALGSLPPPPAAPREPAIHSEGQWVTLPAPLDTINVHLRAGYIIPLQGPGLTTTESRQQPMALAVALTKGGEARGELFWDDGESLEVLERGAYTQVLFLARNNTIVNELVHVTSEGAGLQLQKVTVLGVATTPQQVLSNGVPVSNFTYSPDTKVLDIPVSLLMAEQFLISWS</sequence>
<evidence type="ECO:0000250" key="1"/>
<evidence type="ECO:0000250" key="2">
    <source>
        <dbReference type="UniProtKB" id="P10253"/>
    </source>
</evidence>
<evidence type="ECO:0000255" key="3"/>
<evidence type="ECO:0000255" key="4">
    <source>
        <dbReference type="PROSITE-ProRule" id="PRU00779"/>
    </source>
</evidence>
<evidence type="ECO:0000255" key="5">
    <source>
        <dbReference type="PROSITE-ProRule" id="PRU10066"/>
    </source>
</evidence>
<evidence type="ECO:0000256" key="6">
    <source>
        <dbReference type="SAM" id="MobiDB-lite"/>
    </source>
</evidence>
<evidence type="ECO:0000305" key="7"/>
<reference key="1">
    <citation type="submission" date="2004-11" db="EMBL/GenBank/DDBJ databases">
        <authorList>
            <consortium name="The German cDNA consortium"/>
        </authorList>
    </citation>
    <scope>NUCLEOTIDE SEQUENCE [LARGE SCALE MRNA]</scope>
    <source>
        <tissue>Kidney</tissue>
    </source>
</reference>
<keyword id="KW-1015">Disulfide bond</keyword>
<keyword id="KW-0325">Glycoprotein</keyword>
<keyword id="KW-0326">Glycosidase</keyword>
<keyword id="KW-0378">Hydrolase</keyword>
<keyword id="KW-0458">Lysosome</keyword>
<keyword id="KW-0472">Membrane</keyword>
<keyword id="KW-1185">Reference proteome</keyword>
<keyword id="KW-0732">Signal</keyword>
<organism>
    <name type="scientific">Pongo abelii</name>
    <name type="common">Sumatran orangutan</name>
    <name type="synonym">Pongo pygmaeus abelii</name>
    <dbReference type="NCBI Taxonomy" id="9601"/>
    <lineage>
        <taxon>Eukaryota</taxon>
        <taxon>Metazoa</taxon>
        <taxon>Chordata</taxon>
        <taxon>Craniata</taxon>
        <taxon>Vertebrata</taxon>
        <taxon>Euteleostomi</taxon>
        <taxon>Mammalia</taxon>
        <taxon>Eutheria</taxon>
        <taxon>Euarchontoglires</taxon>
        <taxon>Primates</taxon>
        <taxon>Haplorrhini</taxon>
        <taxon>Catarrhini</taxon>
        <taxon>Hominidae</taxon>
        <taxon>Pongo</taxon>
    </lineage>
</organism>